<protein>
    <recommendedName>
        <fullName evidence="1">Maturase K</fullName>
    </recommendedName>
    <alternativeName>
        <fullName evidence="1">Intron maturase</fullName>
    </alternativeName>
</protein>
<dbReference type="EMBL" id="AF522088">
    <property type="protein sequence ID" value="AAM82080.1"/>
    <property type="molecule type" value="Genomic_DNA"/>
</dbReference>
<dbReference type="GO" id="GO:0009507">
    <property type="term" value="C:chloroplast"/>
    <property type="evidence" value="ECO:0007669"/>
    <property type="project" value="UniProtKB-SubCell"/>
</dbReference>
<dbReference type="GO" id="GO:0003723">
    <property type="term" value="F:RNA binding"/>
    <property type="evidence" value="ECO:0007669"/>
    <property type="project" value="UniProtKB-KW"/>
</dbReference>
<dbReference type="GO" id="GO:0006397">
    <property type="term" value="P:mRNA processing"/>
    <property type="evidence" value="ECO:0007669"/>
    <property type="project" value="UniProtKB-KW"/>
</dbReference>
<dbReference type="GO" id="GO:0008380">
    <property type="term" value="P:RNA splicing"/>
    <property type="evidence" value="ECO:0007669"/>
    <property type="project" value="UniProtKB-UniRule"/>
</dbReference>
<dbReference type="GO" id="GO:0008033">
    <property type="term" value="P:tRNA processing"/>
    <property type="evidence" value="ECO:0007669"/>
    <property type="project" value="UniProtKB-KW"/>
</dbReference>
<dbReference type="HAMAP" id="MF_01390">
    <property type="entry name" value="MatK"/>
    <property type="match status" value="1"/>
</dbReference>
<dbReference type="InterPro" id="IPR024937">
    <property type="entry name" value="Domain_X"/>
</dbReference>
<dbReference type="InterPro" id="IPR002866">
    <property type="entry name" value="Maturase_MatK"/>
</dbReference>
<dbReference type="InterPro" id="IPR024942">
    <property type="entry name" value="Maturase_MatK_N"/>
</dbReference>
<dbReference type="PANTHER" id="PTHR34811">
    <property type="entry name" value="MATURASE K"/>
    <property type="match status" value="1"/>
</dbReference>
<dbReference type="PANTHER" id="PTHR34811:SF1">
    <property type="entry name" value="MATURASE K"/>
    <property type="match status" value="1"/>
</dbReference>
<dbReference type="Pfam" id="PF01348">
    <property type="entry name" value="Intron_maturas2"/>
    <property type="match status" value="1"/>
</dbReference>
<dbReference type="Pfam" id="PF01824">
    <property type="entry name" value="MatK_N"/>
    <property type="match status" value="1"/>
</dbReference>
<comment type="function">
    <text evidence="1">Usually encoded in the trnK tRNA gene intron. Probably assists in splicing its own and other chloroplast group II introns.</text>
</comment>
<comment type="subcellular location">
    <subcellularLocation>
        <location>Plastid</location>
        <location>Chloroplast</location>
    </subcellularLocation>
</comment>
<comment type="similarity">
    <text evidence="1">Belongs to the intron maturase 2 family. MatK subfamily.</text>
</comment>
<evidence type="ECO:0000255" key="1">
    <source>
        <dbReference type="HAMAP-Rule" id="MF_01390"/>
    </source>
</evidence>
<name>MATK_LATVE</name>
<geneLocation type="chloroplast"/>
<reference key="1">
    <citation type="book" date="2003" name="Advances in legume systematics - part 10">
        <title>Phylogenetic analyses of tribes Trifolieae and Vicieae based on sequences of the plastid gene matK (Papilionoideae: Leguminosae).</title>
        <editorList>
            <person name="Klitgaard B.B."/>
            <person name="Bruneau A."/>
        </editorList>
        <authorList>
            <person name="Steele K.P."/>
            <person name="Wojciechowski M.F."/>
        </authorList>
    </citation>
    <scope>NUCLEOTIDE SEQUENCE [GENOMIC DNA]</scope>
</reference>
<keyword id="KW-0150">Chloroplast</keyword>
<keyword id="KW-0507">mRNA processing</keyword>
<keyword id="KW-0934">Plastid</keyword>
<keyword id="KW-0694">RNA-binding</keyword>
<keyword id="KW-0819">tRNA processing</keyword>
<proteinExistence type="inferred from homology"/>
<feature type="chain" id="PRO_0000143461" description="Maturase K">
    <location>
        <begin position="1"/>
        <end position="503"/>
    </location>
</feature>
<organism>
    <name type="scientific">Lathyrus vestitus</name>
    <name type="common">Pacific pea</name>
    <dbReference type="NCBI Taxonomy" id="200950"/>
    <lineage>
        <taxon>Eukaryota</taxon>
        <taxon>Viridiplantae</taxon>
        <taxon>Streptophyta</taxon>
        <taxon>Embryophyta</taxon>
        <taxon>Tracheophyta</taxon>
        <taxon>Spermatophyta</taxon>
        <taxon>Magnoliopsida</taxon>
        <taxon>eudicotyledons</taxon>
        <taxon>Gunneridae</taxon>
        <taxon>Pentapetalae</taxon>
        <taxon>rosids</taxon>
        <taxon>fabids</taxon>
        <taxon>Fabales</taxon>
        <taxon>Fabaceae</taxon>
        <taxon>Papilionoideae</taxon>
        <taxon>50 kb inversion clade</taxon>
        <taxon>NPAAA clade</taxon>
        <taxon>Hologalegina</taxon>
        <taxon>IRL clade</taxon>
        <taxon>Fabeae</taxon>
        <taxon>Lathyrus</taxon>
    </lineage>
</organism>
<gene>
    <name evidence="1" type="primary">matK</name>
</gene>
<sequence length="503" mass="60410">MKEYQVYLERARSRQQDFLYPLLFREYIYGLAYSHNLNRSIFLENVGYDNKYSLLIVKRLITRMYQQNHLIISANDSTKNPFWGYNKNLDSQIISEGFAIVVEIPFLRQLSSSLEEAEILQSYQNWRSIHSIFPFLEDKLTYLNYVSDIRIPYPIHLEILVQILRYWVKDAPFFHLLRLFLYNFSNWNSFLTTKKSISTFSKRNPRLFLFLHNFYVCEYEYIFVFLRTKSSHLRLKSFSVFFERIFFDAKREHLVKVFSKDFSYTLTFFKDPNIHYVRYQGKCILASKNVPFLMNKWKHYFIHLWQCFFDVWPQPRMININPLSEHSFQLLGYFLNVRLNRSVVRSQMLQNTFLIEIGIKKLDIIVPILPLIRSLAKAKFXBILGEPISKPVWADSSDFDIIDRFLRICRNLSHYYNGSSKKKSLYRIKYILRLSCIKTLACKHKSTVRAFLKRSGSEELLQEFFTEEXXILSLIFPXBSSTLQRNRIWYLDILFSNDLVHDE</sequence>
<accession>Q8MCR7</accession>